<keyword id="KW-0963">Cytoplasm</keyword>
<keyword id="KW-0275">Fatty acid biosynthesis</keyword>
<keyword id="KW-0276">Fatty acid metabolism</keyword>
<keyword id="KW-0444">Lipid biosynthesis</keyword>
<keyword id="KW-0443">Lipid metabolism</keyword>
<keyword id="KW-0596">Phosphopantetheine</keyword>
<keyword id="KW-0597">Phosphoprotein</keyword>
<keyword id="KW-1185">Reference proteome</keyword>
<dbReference type="EMBL" id="CP000544">
    <property type="protein sequence ID" value="ABM62007.1"/>
    <property type="molecule type" value="Genomic_DNA"/>
</dbReference>
<dbReference type="RefSeq" id="WP_011814030.1">
    <property type="nucleotide sequence ID" value="NC_008789.1"/>
</dbReference>
<dbReference type="SMR" id="A1WWE5"/>
<dbReference type="STRING" id="349124.Hhal_1232"/>
<dbReference type="KEGG" id="hha:Hhal_1232"/>
<dbReference type="eggNOG" id="COG0236">
    <property type="taxonomic scope" value="Bacteria"/>
</dbReference>
<dbReference type="HOGENOM" id="CLU_108696_5_1_6"/>
<dbReference type="OrthoDB" id="9804551at2"/>
<dbReference type="UniPathway" id="UPA00094"/>
<dbReference type="Proteomes" id="UP000000647">
    <property type="component" value="Chromosome"/>
</dbReference>
<dbReference type="GO" id="GO:0005829">
    <property type="term" value="C:cytosol"/>
    <property type="evidence" value="ECO:0007669"/>
    <property type="project" value="TreeGrafter"/>
</dbReference>
<dbReference type="GO" id="GO:0016020">
    <property type="term" value="C:membrane"/>
    <property type="evidence" value="ECO:0007669"/>
    <property type="project" value="GOC"/>
</dbReference>
<dbReference type="GO" id="GO:0000035">
    <property type="term" value="F:acyl binding"/>
    <property type="evidence" value="ECO:0007669"/>
    <property type="project" value="TreeGrafter"/>
</dbReference>
<dbReference type="GO" id="GO:0000036">
    <property type="term" value="F:acyl carrier activity"/>
    <property type="evidence" value="ECO:0007669"/>
    <property type="project" value="UniProtKB-UniRule"/>
</dbReference>
<dbReference type="GO" id="GO:0009245">
    <property type="term" value="P:lipid A biosynthetic process"/>
    <property type="evidence" value="ECO:0007669"/>
    <property type="project" value="TreeGrafter"/>
</dbReference>
<dbReference type="FunFam" id="1.10.1200.10:FF:000001">
    <property type="entry name" value="Acyl carrier protein"/>
    <property type="match status" value="1"/>
</dbReference>
<dbReference type="Gene3D" id="1.10.1200.10">
    <property type="entry name" value="ACP-like"/>
    <property type="match status" value="1"/>
</dbReference>
<dbReference type="HAMAP" id="MF_01217">
    <property type="entry name" value="Acyl_carrier"/>
    <property type="match status" value="1"/>
</dbReference>
<dbReference type="InterPro" id="IPR003231">
    <property type="entry name" value="ACP"/>
</dbReference>
<dbReference type="InterPro" id="IPR036736">
    <property type="entry name" value="ACP-like_sf"/>
</dbReference>
<dbReference type="InterPro" id="IPR009081">
    <property type="entry name" value="PP-bd_ACP"/>
</dbReference>
<dbReference type="InterPro" id="IPR006162">
    <property type="entry name" value="Ppantetheine_attach_site"/>
</dbReference>
<dbReference type="NCBIfam" id="TIGR00517">
    <property type="entry name" value="acyl_carrier"/>
    <property type="match status" value="1"/>
</dbReference>
<dbReference type="NCBIfam" id="NF002148">
    <property type="entry name" value="PRK00982.1-2"/>
    <property type="match status" value="1"/>
</dbReference>
<dbReference type="NCBIfam" id="NF002149">
    <property type="entry name" value="PRK00982.1-3"/>
    <property type="match status" value="1"/>
</dbReference>
<dbReference type="NCBIfam" id="NF002150">
    <property type="entry name" value="PRK00982.1-4"/>
    <property type="match status" value="1"/>
</dbReference>
<dbReference type="NCBIfam" id="NF002151">
    <property type="entry name" value="PRK00982.1-5"/>
    <property type="match status" value="1"/>
</dbReference>
<dbReference type="PANTHER" id="PTHR20863">
    <property type="entry name" value="ACYL CARRIER PROTEIN"/>
    <property type="match status" value="1"/>
</dbReference>
<dbReference type="PANTHER" id="PTHR20863:SF76">
    <property type="entry name" value="CARRIER DOMAIN-CONTAINING PROTEIN"/>
    <property type="match status" value="1"/>
</dbReference>
<dbReference type="Pfam" id="PF00550">
    <property type="entry name" value="PP-binding"/>
    <property type="match status" value="1"/>
</dbReference>
<dbReference type="SUPFAM" id="SSF47336">
    <property type="entry name" value="ACP-like"/>
    <property type="match status" value="1"/>
</dbReference>
<dbReference type="PROSITE" id="PS50075">
    <property type="entry name" value="CARRIER"/>
    <property type="match status" value="1"/>
</dbReference>
<dbReference type="PROSITE" id="PS00012">
    <property type="entry name" value="PHOSPHOPANTETHEINE"/>
    <property type="match status" value="1"/>
</dbReference>
<comment type="function">
    <text evidence="1">Carrier of the growing fatty acid chain in fatty acid biosynthesis.</text>
</comment>
<comment type="pathway">
    <text evidence="1">Lipid metabolism; fatty acid biosynthesis.</text>
</comment>
<comment type="subcellular location">
    <subcellularLocation>
        <location evidence="1">Cytoplasm</location>
    </subcellularLocation>
</comment>
<comment type="PTM">
    <text evidence="1">4'-phosphopantetheine is transferred from CoA to a specific serine of apo-ACP by AcpS. This modification is essential for activity because fatty acids are bound in thioester linkage to the sulfhydryl of the prosthetic group.</text>
</comment>
<comment type="similarity">
    <text evidence="1">Belongs to the acyl carrier protein (ACP) family.</text>
</comment>
<accession>A1WWE5</accession>
<gene>
    <name evidence="1" type="primary">acpP</name>
    <name type="ordered locus">Hhal_1232</name>
</gene>
<feature type="chain" id="PRO_1000066621" description="Acyl carrier protein">
    <location>
        <begin position="1"/>
        <end position="79"/>
    </location>
</feature>
<feature type="domain" description="Carrier" evidence="2">
    <location>
        <begin position="2"/>
        <end position="77"/>
    </location>
</feature>
<feature type="modified residue" description="O-(pantetheine 4'-phosphoryl)serine" evidence="2">
    <location>
        <position position="37"/>
    </location>
</feature>
<reference key="1">
    <citation type="submission" date="2006-12" db="EMBL/GenBank/DDBJ databases">
        <title>Complete sequence of Halorhodospira halophila SL1.</title>
        <authorList>
            <consortium name="US DOE Joint Genome Institute"/>
            <person name="Copeland A."/>
            <person name="Lucas S."/>
            <person name="Lapidus A."/>
            <person name="Barry K."/>
            <person name="Detter J.C."/>
            <person name="Glavina del Rio T."/>
            <person name="Hammon N."/>
            <person name="Israni S."/>
            <person name="Dalin E."/>
            <person name="Tice H."/>
            <person name="Pitluck S."/>
            <person name="Saunders E."/>
            <person name="Brettin T."/>
            <person name="Bruce D."/>
            <person name="Han C."/>
            <person name="Tapia R."/>
            <person name="Schmutz J."/>
            <person name="Larimer F."/>
            <person name="Land M."/>
            <person name="Hauser L."/>
            <person name="Kyrpides N."/>
            <person name="Mikhailova N."/>
            <person name="Hoff W."/>
            <person name="Richardson P."/>
        </authorList>
    </citation>
    <scope>NUCLEOTIDE SEQUENCE [LARGE SCALE GENOMIC DNA]</scope>
    <source>
        <strain>DSM 244 / SL1</strain>
    </source>
</reference>
<name>ACP_HALHL</name>
<organism>
    <name type="scientific">Halorhodospira halophila (strain DSM 244 / SL1)</name>
    <name type="common">Ectothiorhodospira halophila (strain DSM 244 / SL1)</name>
    <dbReference type="NCBI Taxonomy" id="349124"/>
    <lineage>
        <taxon>Bacteria</taxon>
        <taxon>Pseudomonadati</taxon>
        <taxon>Pseudomonadota</taxon>
        <taxon>Gammaproteobacteria</taxon>
        <taxon>Chromatiales</taxon>
        <taxon>Ectothiorhodospiraceae</taxon>
        <taxon>Halorhodospira</taxon>
    </lineage>
</organism>
<protein>
    <recommendedName>
        <fullName evidence="1">Acyl carrier protein</fullName>
        <shortName evidence="1">ACP</shortName>
    </recommendedName>
</protein>
<sequence length="79" mass="8829">MSSIEDRVKKIVVEQLGVKEEEVTGEASFVDDLGADSLDTVELVMALEEEFECEIPDEEAEKITTVQQAVDYIKKHLEG</sequence>
<evidence type="ECO:0000255" key="1">
    <source>
        <dbReference type="HAMAP-Rule" id="MF_01217"/>
    </source>
</evidence>
<evidence type="ECO:0000255" key="2">
    <source>
        <dbReference type="PROSITE-ProRule" id="PRU00258"/>
    </source>
</evidence>
<proteinExistence type="inferred from homology"/>